<sequence length="334" mass="38049">MSLQIDQIALHQLIKRDEQTLDVVLRDSLLATDQVVEDMMAELHRVYSAKSKAYGLFNEESELAEALRHQRKGDEDFLGFSRAATARLRDELAKYPFAEGGTVLFCQYRYLAVEYLLIAVLNSCNSMSVNDNLDLNTTHYLDIPHADIVARIDLTEWETNPESSRYLTFLKGRVGRKVSDFFMDFLAASEGMNAKVQNKGLLQAVDDYCESGELNKDERQAYRQQVYNYCNEQLQAGEEIEIKALSQALPTFGEQNFQQFSQEQEYELEESFPADRSTLRQLTKFAGSGGGLTINFDAMLFGERIFWDPATDTLTIKGTPPNLRDQLQRRSSGH</sequence>
<proteinExistence type="inferred from homology"/>
<feature type="chain" id="PRO_0000210911" description="Nucleoid-associated protein plu2870">
    <location>
        <begin position="1"/>
        <end position="334"/>
    </location>
</feature>
<keyword id="KW-0963">Cytoplasm</keyword>
<keyword id="KW-1185">Reference proteome</keyword>
<reference key="1">
    <citation type="journal article" date="2003" name="Nat. Biotechnol.">
        <title>The genome sequence of the entomopathogenic bacterium Photorhabdus luminescens.</title>
        <authorList>
            <person name="Duchaud E."/>
            <person name="Rusniok C."/>
            <person name="Frangeul L."/>
            <person name="Buchrieser C."/>
            <person name="Givaudan A."/>
            <person name="Taourit S."/>
            <person name="Bocs S."/>
            <person name="Boursaux-Eude C."/>
            <person name="Chandler M."/>
            <person name="Charles J.-F."/>
            <person name="Dassa E."/>
            <person name="Derose R."/>
            <person name="Derzelle S."/>
            <person name="Freyssinet G."/>
            <person name="Gaudriault S."/>
            <person name="Medigue C."/>
            <person name="Lanois A."/>
            <person name="Powell K."/>
            <person name="Siguier P."/>
            <person name="Vincent R."/>
            <person name="Wingate V."/>
            <person name="Zouine M."/>
            <person name="Glaser P."/>
            <person name="Boemare N."/>
            <person name="Danchin A."/>
            <person name="Kunst F."/>
        </authorList>
    </citation>
    <scope>NUCLEOTIDE SEQUENCE [LARGE SCALE GENOMIC DNA]</scope>
    <source>
        <strain>DSM 15139 / CIP 105565 / TT01</strain>
    </source>
</reference>
<gene>
    <name type="ordered locus">plu2870</name>
</gene>
<dbReference type="EMBL" id="BX571868">
    <property type="protein sequence ID" value="CAE15244.1"/>
    <property type="molecule type" value="Genomic_DNA"/>
</dbReference>
<dbReference type="RefSeq" id="WP_011147090.1">
    <property type="nucleotide sequence ID" value="NC_005126.1"/>
</dbReference>
<dbReference type="SMR" id="P60054"/>
<dbReference type="STRING" id="243265.plu2870"/>
<dbReference type="GeneID" id="48849132"/>
<dbReference type="KEGG" id="plu:plu2870"/>
<dbReference type="eggNOG" id="COG3081">
    <property type="taxonomic scope" value="Bacteria"/>
</dbReference>
<dbReference type="HOGENOM" id="CLU_063050_0_1_6"/>
<dbReference type="OrthoDB" id="9131762at2"/>
<dbReference type="Proteomes" id="UP000002514">
    <property type="component" value="Chromosome"/>
</dbReference>
<dbReference type="GO" id="GO:0043590">
    <property type="term" value="C:bacterial nucleoid"/>
    <property type="evidence" value="ECO:0007669"/>
    <property type="project" value="TreeGrafter"/>
</dbReference>
<dbReference type="GO" id="GO:0005737">
    <property type="term" value="C:cytoplasm"/>
    <property type="evidence" value="ECO:0007669"/>
    <property type="project" value="UniProtKB-UniRule"/>
</dbReference>
<dbReference type="GO" id="GO:0003690">
    <property type="term" value="F:double-stranded DNA binding"/>
    <property type="evidence" value="ECO:0007669"/>
    <property type="project" value="TreeGrafter"/>
</dbReference>
<dbReference type="GO" id="GO:0003727">
    <property type="term" value="F:single-stranded RNA binding"/>
    <property type="evidence" value="ECO:0007669"/>
    <property type="project" value="TreeGrafter"/>
</dbReference>
<dbReference type="HAMAP" id="MF_00730">
    <property type="entry name" value="NdpA"/>
    <property type="match status" value="1"/>
</dbReference>
<dbReference type="InterPro" id="IPR007358">
    <property type="entry name" value="Nucleoid_associated_NdpA"/>
</dbReference>
<dbReference type="NCBIfam" id="NF001557">
    <property type="entry name" value="PRK00378.1"/>
    <property type="match status" value="1"/>
</dbReference>
<dbReference type="PANTHER" id="PTHR38772">
    <property type="match status" value="1"/>
</dbReference>
<dbReference type="PANTHER" id="PTHR38772:SF1">
    <property type="entry name" value="NUCLEOID-ASSOCIATED PROTEIN YEJK"/>
    <property type="match status" value="1"/>
</dbReference>
<dbReference type="Pfam" id="PF04245">
    <property type="entry name" value="NA37"/>
    <property type="match status" value="1"/>
</dbReference>
<accession>P60054</accession>
<protein>
    <recommendedName>
        <fullName evidence="1">Nucleoid-associated protein plu2870</fullName>
    </recommendedName>
</protein>
<comment type="subcellular location">
    <subcellularLocation>
        <location evidence="1">Cytoplasm</location>
        <location evidence="1">Nucleoid</location>
    </subcellularLocation>
</comment>
<comment type="similarity">
    <text evidence="1">Belongs to the YejK family.</text>
</comment>
<name>NDPA_PHOLL</name>
<organism>
    <name type="scientific">Photorhabdus laumondii subsp. laumondii (strain DSM 15139 / CIP 105565 / TT01)</name>
    <name type="common">Photorhabdus luminescens subsp. laumondii</name>
    <dbReference type="NCBI Taxonomy" id="243265"/>
    <lineage>
        <taxon>Bacteria</taxon>
        <taxon>Pseudomonadati</taxon>
        <taxon>Pseudomonadota</taxon>
        <taxon>Gammaproteobacteria</taxon>
        <taxon>Enterobacterales</taxon>
        <taxon>Morganellaceae</taxon>
        <taxon>Photorhabdus</taxon>
    </lineage>
</organism>
<evidence type="ECO:0000255" key="1">
    <source>
        <dbReference type="HAMAP-Rule" id="MF_00730"/>
    </source>
</evidence>